<sequence length="369" mass="41132">MLYYLLQYINELFDPPGFGVIEYITFRASAAAITSLLITILAGPKLIGYLKSKYIEPVKEEAPPEHRQKRKELPTMGGTLIIFSVVVSGLLWAKFNDPYVWLILLSILWMGTIGFIDDYRKVVLKIKGGLSAKYKLIGQVSLGLFIGFYTRFDPAFSVLLTETTIPFFKDLMIDYGWWYIPVVVFIITAVSNAVNLTDGLDGLAAGTSGIVVFGLGGFAYLTGNAVYSEYLNIAFIPGGGEVAVVSMAIVMACVGFLWFNSHPAEIFMGDTGSLALGSAIAVIALLIKKELLLPVLAGTFLLETLSVSLQVTWFKFTKWRFGEGRRIFLMAPLHHHYQMKGWAEEKIVIRFWIITLLFFLASLMTLKLR</sequence>
<proteinExistence type="inferred from homology"/>
<gene>
    <name evidence="1" type="primary">mraY</name>
    <name type="ordered locus">Cphamn1_2525</name>
</gene>
<organism>
    <name type="scientific">Chlorobium phaeobacteroides (strain BS1)</name>
    <dbReference type="NCBI Taxonomy" id="331678"/>
    <lineage>
        <taxon>Bacteria</taxon>
        <taxon>Pseudomonadati</taxon>
        <taxon>Chlorobiota</taxon>
        <taxon>Chlorobiia</taxon>
        <taxon>Chlorobiales</taxon>
        <taxon>Chlorobiaceae</taxon>
        <taxon>Chlorobium/Pelodictyon group</taxon>
        <taxon>Chlorobium</taxon>
    </lineage>
</organism>
<evidence type="ECO:0000255" key="1">
    <source>
        <dbReference type="HAMAP-Rule" id="MF_00038"/>
    </source>
</evidence>
<dbReference type="EC" id="2.7.8.13" evidence="1"/>
<dbReference type="EMBL" id="CP001101">
    <property type="protein sequence ID" value="ACE05419.1"/>
    <property type="molecule type" value="Genomic_DNA"/>
</dbReference>
<dbReference type="SMR" id="B3EQC1"/>
<dbReference type="STRING" id="331678.Cphamn1_2525"/>
<dbReference type="KEGG" id="cpb:Cphamn1_2525"/>
<dbReference type="eggNOG" id="COG0472">
    <property type="taxonomic scope" value="Bacteria"/>
</dbReference>
<dbReference type="HOGENOM" id="CLU_023982_0_0_10"/>
<dbReference type="OrthoDB" id="9805475at2"/>
<dbReference type="UniPathway" id="UPA00219"/>
<dbReference type="GO" id="GO:0005886">
    <property type="term" value="C:plasma membrane"/>
    <property type="evidence" value="ECO:0007669"/>
    <property type="project" value="UniProtKB-SubCell"/>
</dbReference>
<dbReference type="GO" id="GO:0046872">
    <property type="term" value="F:metal ion binding"/>
    <property type="evidence" value="ECO:0007669"/>
    <property type="project" value="UniProtKB-KW"/>
</dbReference>
<dbReference type="GO" id="GO:0008963">
    <property type="term" value="F:phospho-N-acetylmuramoyl-pentapeptide-transferase activity"/>
    <property type="evidence" value="ECO:0007669"/>
    <property type="project" value="UniProtKB-UniRule"/>
</dbReference>
<dbReference type="GO" id="GO:0051992">
    <property type="term" value="F:UDP-N-acetylmuramoyl-L-alanyl-D-glutamyl-meso-2,6-diaminopimelyl-D-alanyl-D-alanine:undecaprenyl-phosphate transferase activity"/>
    <property type="evidence" value="ECO:0007669"/>
    <property type="project" value="RHEA"/>
</dbReference>
<dbReference type="GO" id="GO:0051301">
    <property type="term" value="P:cell division"/>
    <property type="evidence" value="ECO:0007669"/>
    <property type="project" value="UniProtKB-KW"/>
</dbReference>
<dbReference type="GO" id="GO:0071555">
    <property type="term" value="P:cell wall organization"/>
    <property type="evidence" value="ECO:0007669"/>
    <property type="project" value="UniProtKB-KW"/>
</dbReference>
<dbReference type="GO" id="GO:0009252">
    <property type="term" value="P:peptidoglycan biosynthetic process"/>
    <property type="evidence" value="ECO:0007669"/>
    <property type="project" value="UniProtKB-UniRule"/>
</dbReference>
<dbReference type="GO" id="GO:0008360">
    <property type="term" value="P:regulation of cell shape"/>
    <property type="evidence" value="ECO:0007669"/>
    <property type="project" value="UniProtKB-KW"/>
</dbReference>
<dbReference type="CDD" id="cd06852">
    <property type="entry name" value="GT_MraY"/>
    <property type="match status" value="1"/>
</dbReference>
<dbReference type="HAMAP" id="MF_00038">
    <property type="entry name" value="MraY"/>
    <property type="match status" value="1"/>
</dbReference>
<dbReference type="InterPro" id="IPR000715">
    <property type="entry name" value="Glycosyl_transferase_4"/>
</dbReference>
<dbReference type="InterPro" id="IPR003524">
    <property type="entry name" value="PNAcMuramoyl-5peptid_Trfase"/>
</dbReference>
<dbReference type="InterPro" id="IPR018480">
    <property type="entry name" value="PNAcMuramoyl-5peptid_Trfase_CS"/>
</dbReference>
<dbReference type="NCBIfam" id="TIGR00445">
    <property type="entry name" value="mraY"/>
    <property type="match status" value="1"/>
</dbReference>
<dbReference type="PANTHER" id="PTHR22926">
    <property type="entry name" value="PHOSPHO-N-ACETYLMURAMOYL-PENTAPEPTIDE-TRANSFERASE"/>
    <property type="match status" value="1"/>
</dbReference>
<dbReference type="PANTHER" id="PTHR22926:SF5">
    <property type="entry name" value="PHOSPHO-N-ACETYLMURAMOYL-PENTAPEPTIDE-TRANSFERASE HOMOLOG"/>
    <property type="match status" value="1"/>
</dbReference>
<dbReference type="Pfam" id="PF00953">
    <property type="entry name" value="Glycos_transf_4"/>
    <property type="match status" value="1"/>
</dbReference>
<dbReference type="PROSITE" id="PS01348">
    <property type="entry name" value="MRAY_2"/>
    <property type="match status" value="1"/>
</dbReference>
<accession>B3EQC1</accession>
<comment type="function">
    <text evidence="1">Catalyzes the initial step of the lipid cycle reactions in the biosynthesis of the cell wall peptidoglycan: transfers peptidoglycan precursor phospho-MurNAc-pentapeptide from UDP-MurNAc-pentapeptide onto the lipid carrier undecaprenyl phosphate, yielding undecaprenyl-pyrophosphoryl-MurNAc-pentapeptide, known as lipid I.</text>
</comment>
<comment type="catalytic activity">
    <reaction evidence="1">
        <text>UDP-N-acetyl-alpha-D-muramoyl-L-alanyl-gamma-D-glutamyl-meso-2,6-diaminopimeloyl-D-alanyl-D-alanine + di-trans,octa-cis-undecaprenyl phosphate = di-trans,octa-cis-undecaprenyl diphospho-N-acetyl-alpha-D-muramoyl-L-alanyl-D-glutamyl-meso-2,6-diaminopimeloyl-D-alanyl-D-alanine + UMP</text>
        <dbReference type="Rhea" id="RHEA:28386"/>
        <dbReference type="ChEBI" id="CHEBI:57865"/>
        <dbReference type="ChEBI" id="CHEBI:60392"/>
        <dbReference type="ChEBI" id="CHEBI:61386"/>
        <dbReference type="ChEBI" id="CHEBI:61387"/>
        <dbReference type="EC" id="2.7.8.13"/>
    </reaction>
</comment>
<comment type="cofactor">
    <cofactor evidence="1">
        <name>Mg(2+)</name>
        <dbReference type="ChEBI" id="CHEBI:18420"/>
    </cofactor>
</comment>
<comment type="pathway">
    <text evidence="1">Cell wall biogenesis; peptidoglycan biosynthesis.</text>
</comment>
<comment type="subcellular location">
    <subcellularLocation>
        <location evidence="1">Cell inner membrane</location>
        <topology evidence="1">Multi-pass membrane protein</topology>
    </subcellularLocation>
</comment>
<comment type="similarity">
    <text evidence="1">Belongs to the glycosyltransferase 4 family. MraY subfamily.</text>
</comment>
<name>MRAY_CHLPB</name>
<reference key="1">
    <citation type="submission" date="2008-06" db="EMBL/GenBank/DDBJ databases">
        <title>Complete sequence of Chlorobium phaeobacteroides BS1.</title>
        <authorList>
            <consortium name="US DOE Joint Genome Institute"/>
            <person name="Lucas S."/>
            <person name="Copeland A."/>
            <person name="Lapidus A."/>
            <person name="Glavina del Rio T."/>
            <person name="Dalin E."/>
            <person name="Tice H."/>
            <person name="Bruce D."/>
            <person name="Goodwin L."/>
            <person name="Pitluck S."/>
            <person name="Schmutz J."/>
            <person name="Larimer F."/>
            <person name="Land M."/>
            <person name="Hauser L."/>
            <person name="Kyrpides N."/>
            <person name="Ovchinnikova G."/>
            <person name="Li T."/>
            <person name="Liu Z."/>
            <person name="Zhao F."/>
            <person name="Overmann J."/>
            <person name="Bryant D.A."/>
            <person name="Richardson P."/>
        </authorList>
    </citation>
    <scope>NUCLEOTIDE SEQUENCE [LARGE SCALE GENOMIC DNA]</scope>
    <source>
        <strain>BS1</strain>
    </source>
</reference>
<keyword id="KW-0131">Cell cycle</keyword>
<keyword id="KW-0132">Cell division</keyword>
<keyword id="KW-0997">Cell inner membrane</keyword>
<keyword id="KW-1003">Cell membrane</keyword>
<keyword id="KW-0133">Cell shape</keyword>
<keyword id="KW-0961">Cell wall biogenesis/degradation</keyword>
<keyword id="KW-0460">Magnesium</keyword>
<keyword id="KW-0472">Membrane</keyword>
<keyword id="KW-0479">Metal-binding</keyword>
<keyword id="KW-0573">Peptidoglycan synthesis</keyword>
<keyword id="KW-0808">Transferase</keyword>
<keyword id="KW-0812">Transmembrane</keyword>
<keyword id="KW-1133">Transmembrane helix</keyword>
<feature type="chain" id="PRO_1000090608" description="Phospho-N-acetylmuramoyl-pentapeptide-transferase">
    <location>
        <begin position="1"/>
        <end position="369"/>
    </location>
</feature>
<feature type="transmembrane region" description="Helical" evidence="1">
    <location>
        <begin position="30"/>
        <end position="50"/>
    </location>
</feature>
<feature type="transmembrane region" description="Helical" evidence="1">
    <location>
        <begin position="73"/>
        <end position="93"/>
    </location>
</feature>
<feature type="transmembrane region" description="Helical" evidence="1">
    <location>
        <begin position="99"/>
        <end position="119"/>
    </location>
</feature>
<feature type="transmembrane region" description="Helical" evidence="1">
    <location>
        <begin position="140"/>
        <end position="160"/>
    </location>
</feature>
<feature type="transmembrane region" description="Helical" evidence="1">
    <location>
        <begin position="171"/>
        <end position="191"/>
    </location>
</feature>
<feature type="transmembrane region" description="Helical" evidence="1">
    <location>
        <begin position="202"/>
        <end position="222"/>
    </location>
</feature>
<feature type="transmembrane region" description="Helical" evidence="1">
    <location>
        <begin position="239"/>
        <end position="259"/>
    </location>
</feature>
<feature type="transmembrane region" description="Helical" evidence="1">
    <location>
        <begin position="266"/>
        <end position="286"/>
    </location>
</feature>
<feature type="transmembrane region" description="Helical" evidence="1">
    <location>
        <begin position="291"/>
        <end position="311"/>
    </location>
</feature>
<feature type="transmembrane region" description="Helical" evidence="1">
    <location>
        <begin position="346"/>
        <end position="366"/>
    </location>
</feature>
<protein>
    <recommendedName>
        <fullName evidence="1">Phospho-N-acetylmuramoyl-pentapeptide-transferase</fullName>
        <ecNumber evidence="1">2.7.8.13</ecNumber>
    </recommendedName>
    <alternativeName>
        <fullName evidence="1">UDP-MurNAc-pentapeptide phosphotransferase</fullName>
    </alternativeName>
</protein>